<protein>
    <recommendedName>
        <fullName>Heat shock 70 kDa protein 8</fullName>
    </recommendedName>
    <alternativeName>
        <fullName>Heat shock protein 70-8</fullName>
        <shortName>AtHsp70-8</shortName>
    </alternativeName>
    <alternativeName>
        <fullName>Heat-shock protein 70T-2</fullName>
    </alternativeName>
</protein>
<accession>Q9SKY8</accession>
<accession>Q8L8N8</accession>
<gene>
    <name type="primary">HSP70-8</name>
    <name type="synonym">HSP70T-2</name>
    <name type="ordered locus">At2g32120</name>
    <name type="ORF">F22D22.13</name>
</gene>
<reference key="1">
    <citation type="journal article" date="1999" name="Nature">
        <title>Sequence and analysis of chromosome 2 of the plant Arabidopsis thaliana.</title>
        <authorList>
            <person name="Lin X."/>
            <person name="Kaul S."/>
            <person name="Rounsley S.D."/>
            <person name="Shea T.P."/>
            <person name="Benito M.-I."/>
            <person name="Town C.D."/>
            <person name="Fujii C.Y."/>
            <person name="Mason T.M."/>
            <person name="Bowman C.L."/>
            <person name="Barnstead M.E."/>
            <person name="Feldblyum T.V."/>
            <person name="Buell C.R."/>
            <person name="Ketchum K.A."/>
            <person name="Lee J.J."/>
            <person name="Ronning C.M."/>
            <person name="Koo H.L."/>
            <person name="Moffat K.S."/>
            <person name="Cronin L.A."/>
            <person name="Shen M."/>
            <person name="Pai G."/>
            <person name="Van Aken S."/>
            <person name="Umayam L."/>
            <person name="Tallon L.J."/>
            <person name="Gill J.E."/>
            <person name="Adams M.D."/>
            <person name="Carrera A.J."/>
            <person name="Creasy T.H."/>
            <person name="Goodman H.M."/>
            <person name="Somerville C.R."/>
            <person name="Copenhaver G.P."/>
            <person name="Preuss D."/>
            <person name="Nierman W.C."/>
            <person name="White O."/>
            <person name="Eisen J.A."/>
            <person name="Salzberg S.L."/>
            <person name="Fraser C.M."/>
            <person name="Venter J.C."/>
        </authorList>
    </citation>
    <scope>NUCLEOTIDE SEQUENCE [LARGE SCALE GENOMIC DNA]</scope>
    <source>
        <strain>cv. Columbia</strain>
    </source>
</reference>
<reference key="2">
    <citation type="journal article" date="2017" name="Plant J.">
        <title>Araport11: a complete reannotation of the Arabidopsis thaliana reference genome.</title>
        <authorList>
            <person name="Cheng C.Y."/>
            <person name="Krishnakumar V."/>
            <person name="Chan A.P."/>
            <person name="Thibaud-Nissen F."/>
            <person name="Schobel S."/>
            <person name="Town C.D."/>
        </authorList>
    </citation>
    <scope>GENOME REANNOTATION</scope>
    <source>
        <strain>cv. Columbia</strain>
    </source>
</reference>
<reference key="3">
    <citation type="journal article" date="2003" name="Science">
        <title>Empirical analysis of transcriptional activity in the Arabidopsis genome.</title>
        <authorList>
            <person name="Yamada K."/>
            <person name="Lim J."/>
            <person name="Dale J.M."/>
            <person name="Chen H."/>
            <person name="Shinn P."/>
            <person name="Palm C.J."/>
            <person name="Southwick A.M."/>
            <person name="Wu H.C."/>
            <person name="Kim C.J."/>
            <person name="Nguyen M."/>
            <person name="Pham P.K."/>
            <person name="Cheuk R.F."/>
            <person name="Karlin-Newmann G."/>
            <person name="Liu S.X."/>
            <person name="Lam B."/>
            <person name="Sakano H."/>
            <person name="Wu T."/>
            <person name="Yu G."/>
            <person name="Miranda M."/>
            <person name="Quach H.L."/>
            <person name="Tripp M."/>
            <person name="Chang C.H."/>
            <person name="Lee J.M."/>
            <person name="Toriumi M.J."/>
            <person name="Chan M.M."/>
            <person name="Tang C.C."/>
            <person name="Onodera C.S."/>
            <person name="Deng J.M."/>
            <person name="Akiyama K."/>
            <person name="Ansari Y."/>
            <person name="Arakawa T."/>
            <person name="Banh J."/>
            <person name="Banno F."/>
            <person name="Bowser L."/>
            <person name="Brooks S.Y."/>
            <person name="Carninci P."/>
            <person name="Chao Q."/>
            <person name="Choy N."/>
            <person name="Enju A."/>
            <person name="Goldsmith A.D."/>
            <person name="Gurjal M."/>
            <person name="Hansen N.F."/>
            <person name="Hayashizaki Y."/>
            <person name="Johnson-Hopson C."/>
            <person name="Hsuan V.W."/>
            <person name="Iida K."/>
            <person name="Karnes M."/>
            <person name="Khan S."/>
            <person name="Koesema E."/>
            <person name="Ishida J."/>
            <person name="Jiang P.X."/>
            <person name="Jones T."/>
            <person name="Kawai J."/>
            <person name="Kamiya A."/>
            <person name="Meyers C."/>
            <person name="Nakajima M."/>
            <person name="Narusaka M."/>
            <person name="Seki M."/>
            <person name="Sakurai T."/>
            <person name="Satou M."/>
            <person name="Tamse R."/>
            <person name="Vaysberg M."/>
            <person name="Wallender E.K."/>
            <person name="Wong C."/>
            <person name="Yamamura Y."/>
            <person name="Yuan S."/>
            <person name="Shinozaki K."/>
            <person name="Davis R.W."/>
            <person name="Theologis A."/>
            <person name="Ecker J.R."/>
        </authorList>
    </citation>
    <scope>NUCLEOTIDE SEQUENCE [LARGE SCALE MRNA]</scope>
    <source>
        <strain>cv. Columbia</strain>
    </source>
</reference>
<reference key="4">
    <citation type="submission" date="2002-03" db="EMBL/GenBank/DDBJ databases">
        <title>Full-length cDNA from Arabidopsis thaliana.</title>
        <authorList>
            <person name="Brover V.V."/>
            <person name="Troukhan M.E."/>
            <person name="Alexandrov N.A."/>
            <person name="Lu Y.-P."/>
            <person name="Flavell R.B."/>
            <person name="Feldmann K.A."/>
        </authorList>
    </citation>
    <scope>NUCLEOTIDE SEQUENCE [LARGE SCALE MRNA]</scope>
</reference>
<reference key="5">
    <citation type="journal article" date="2001" name="Cell Stress Chaperones">
        <title>Genomic analysis of the Hsp70 superfamily in Arabidopsis thaliana.</title>
        <authorList>
            <person name="Lin B.L."/>
            <person name="Wang J.S."/>
            <person name="Liu H.C."/>
            <person name="Chen R.W."/>
            <person name="Meyer Y."/>
            <person name="Barakat A."/>
            <person name="Delseny M."/>
        </authorList>
    </citation>
    <scope>GENE FAMILY</scope>
    <scope>NOMENCLATURE</scope>
</reference>
<reference key="6">
    <citation type="journal article" date="2001" name="Plant Physiol.">
        <title>Comprehensive expression profile analysis of the Arabidopsis Hsp70 gene family.</title>
        <authorList>
            <person name="Sung D.Y."/>
            <person name="Vierling E."/>
            <person name="Guy C.L."/>
        </authorList>
    </citation>
    <scope>DNAK GENE SUBFAMILY</scope>
</reference>
<reference key="7">
    <citation type="journal article" date="2012" name="Mol. Cell. Proteomics">
        <title>Comparative large-scale characterisation of plant vs. mammal proteins reveals similar and idiosyncratic N-alpha acetylation features.</title>
        <authorList>
            <person name="Bienvenut W.V."/>
            <person name="Sumpton D."/>
            <person name="Martinez A."/>
            <person name="Lilla S."/>
            <person name="Espagne C."/>
            <person name="Meinnel T."/>
            <person name="Giglione C."/>
        </authorList>
    </citation>
    <scope>ACETYLATION [LARGE SCALE ANALYSIS] AT ALA-2</scope>
    <scope>CLEAVAGE OF INITIATOR METHIONINE [LARGE SCALE ANALYSIS]</scope>
    <scope>IDENTIFICATION BY MASS SPECTROMETRY [LARGE SCALE ANALYSIS]</scope>
</reference>
<feature type="initiator methionine" description="Removed" evidence="3">
    <location>
        <position position="1"/>
    </location>
</feature>
<feature type="chain" id="PRO_0000415427" description="Heat shock 70 kDa protein 8">
    <location>
        <begin position="2"/>
        <end position="563"/>
    </location>
</feature>
<feature type="region of interest" description="Disordered" evidence="1">
    <location>
        <begin position="1"/>
        <end position="25"/>
    </location>
</feature>
<feature type="modified residue" description="N-acetylalanine" evidence="3">
    <location>
        <position position="2"/>
    </location>
</feature>
<feature type="sequence conflict" description="In Ref. 4; AAM67201." evidence="2" ref="4">
    <original>N</original>
    <variation>S</variation>
    <location>
        <position position="270"/>
    </location>
</feature>
<feature type="sequence conflict" description="In Ref. 4; AAM67201." evidence="2" ref="4">
    <original>V</original>
    <variation>A</variation>
    <location>
        <position position="426"/>
    </location>
</feature>
<feature type="sequence conflict" description="In Ref. 4; AAM67201." evidence="2" ref="4">
    <original>S</original>
    <variation>T</variation>
    <location>
        <position position="522"/>
    </location>
</feature>
<feature type="sequence conflict" description="In Ref. 4; AAM67201." evidence="2" ref="4">
    <original>L</original>
    <variation>F</variation>
    <location>
        <position position="559"/>
    </location>
</feature>
<sequence length="563" mass="60989">MAEAAYTVASDSENTGEEKSSSSPSLPEIALGIDIGTSQCSIAVWNGSQVHILRNTRNQKLIKSFVTFKDEVPAGGVSNQLAHEQEMLTGAAIFNMKRLVGRVDTDPVVHASKNLPFLVQTLDIGVRPFIAALVNNAWRSTTPEEVLAIFLVELRLMAEAQLKRPVRNVVLTVPVSFSRFQLTRFERACAMAGLHVLRLMPEPTAIALLYAQQQQMTTHDNMGSGSERLAVIFNMGAGYCDVAVTATAGGVSQIKALAGSPIGGEDILQNTIRHIAPPNEEASGLLRVAAQDAIHRLTDQENVQIEVDLGNGNKISKVLDRLEFEEVNQKVFEECERLVVQCLRDARVNGGDIDDLIMVGGCSYIPKVRTIIKNVCKKDEIYKGVNPLEAAVRGAALEGAVTSGIHDPFGSLDLLTIQATPLAVGVRANGNKFIPVIPRNTMVPARKDLFFTTVQDNQKEALIIIYEGEGETVEENHLLGYFKLVGIPPAPKGVPEINVCMDIDASNALRVFAAVLMPGSSSPVVPVIEVRMPTVDDGHGWCAQALNVKYGATLDLITLQRKM</sequence>
<organism>
    <name type="scientific">Arabidopsis thaliana</name>
    <name type="common">Mouse-ear cress</name>
    <dbReference type="NCBI Taxonomy" id="3702"/>
    <lineage>
        <taxon>Eukaryota</taxon>
        <taxon>Viridiplantae</taxon>
        <taxon>Streptophyta</taxon>
        <taxon>Embryophyta</taxon>
        <taxon>Tracheophyta</taxon>
        <taxon>Spermatophyta</taxon>
        <taxon>Magnoliopsida</taxon>
        <taxon>eudicotyledons</taxon>
        <taxon>Gunneridae</taxon>
        <taxon>Pentapetalae</taxon>
        <taxon>rosids</taxon>
        <taxon>malvids</taxon>
        <taxon>Brassicales</taxon>
        <taxon>Brassicaceae</taxon>
        <taxon>Camelineae</taxon>
        <taxon>Arabidopsis</taxon>
    </lineage>
</organism>
<evidence type="ECO:0000256" key="1">
    <source>
        <dbReference type="SAM" id="MobiDB-lite"/>
    </source>
</evidence>
<evidence type="ECO:0000305" key="2"/>
<evidence type="ECO:0007744" key="3">
    <source>
    </source>
</evidence>
<dbReference type="EMBL" id="AC006223">
    <property type="protein sequence ID" value="AAD15393.1"/>
    <property type="molecule type" value="Genomic_DNA"/>
</dbReference>
<dbReference type="EMBL" id="CP002685">
    <property type="protein sequence ID" value="AEC08636.1"/>
    <property type="molecule type" value="Genomic_DNA"/>
</dbReference>
<dbReference type="EMBL" id="CP002685">
    <property type="protein sequence ID" value="AEC08637.1"/>
    <property type="molecule type" value="Genomic_DNA"/>
</dbReference>
<dbReference type="EMBL" id="AY123990">
    <property type="protein sequence ID" value="AAM74502.1"/>
    <property type="molecule type" value="mRNA"/>
</dbReference>
<dbReference type="EMBL" id="BT001079">
    <property type="protein sequence ID" value="AAN46859.1"/>
    <property type="molecule type" value="mRNA"/>
</dbReference>
<dbReference type="EMBL" id="AY088895">
    <property type="protein sequence ID" value="AAM67201.1"/>
    <property type="molecule type" value="mRNA"/>
</dbReference>
<dbReference type="PIR" id="B84729">
    <property type="entry name" value="B84729"/>
</dbReference>
<dbReference type="RefSeq" id="NP_180771.1">
    <property type="nucleotide sequence ID" value="NM_128771.4"/>
</dbReference>
<dbReference type="RefSeq" id="NP_850183.1">
    <property type="nucleotide sequence ID" value="NM_179852.3"/>
</dbReference>
<dbReference type="SMR" id="Q9SKY8"/>
<dbReference type="FunCoup" id="Q9SKY8">
    <property type="interactions" value="204"/>
</dbReference>
<dbReference type="STRING" id="3702.Q9SKY8"/>
<dbReference type="iPTMnet" id="Q9SKY8"/>
<dbReference type="PaxDb" id="3702-AT2G32120.1"/>
<dbReference type="ProteomicsDB" id="232091"/>
<dbReference type="EnsemblPlants" id="AT2G32120.1">
    <property type="protein sequence ID" value="AT2G32120.1"/>
    <property type="gene ID" value="AT2G32120"/>
</dbReference>
<dbReference type="EnsemblPlants" id="AT2G32120.2">
    <property type="protein sequence ID" value="AT2G32120.2"/>
    <property type="gene ID" value="AT2G32120"/>
</dbReference>
<dbReference type="GeneID" id="817771"/>
<dbReference type="Gramene" id="AT2G32120.1">
    <property type="protein sequence ID" value="AT2G32120.1"/>
    <property type="gene ID" value="AT2G32120"/>
</dbReference>
<dbReference type="Gramene" id="AT2G32120.2">
    <property type="protein sequence ID" value="AT2G32120.2"/>
    <property type="gene ID" value="AT2G32120"/>
</dbReference>
<dbReference type="KEGG" id="ath:AT2G32120"/>
<dbReference type="Araport" id="AT2G32120"/>
<dbReference type="TAIR" id="AT2G32120">
    <property type="gene designation" value="HSP70T-2"/>
</dbReference>
<dbReference type="eggNOG" id="KOG0101">
    <property type="taxonomic scope" value="Eukaryota"/>
</dbReference>
<dbReference type="HOGENOM" id="CLU_005965_0_1_1"/>
<dbReference type="InParanoid" id="Q9SKY8"/>
<dbReference type="OMA" id="LYSGMNP"/>
<dbReference type="PhylomeDB" id="Q9SKY8"/>
<dbReference type="PRO" id="PR:Q9SKY8"/>
<dbReference type="Proteomes" id="UP000006548">
    <property type="component" value="Chromosome 2"/>
</dbReference>
<dbReference type="ExpressionAtlas" id="Q9SKY8">
    <property type="expression patterns" value="baseline and differential"/>
</dbReference>
<dbReference type="GO" id="GO:0005524">
    <property type="term" value="F:ATP binding"/>
    <property type="evidence" value="ECO:0007669"/>
    <property type="project" value="UniProtKB-KW"/>
</dbReference>
<dbReference type="GO" id="GO:0140662">
    <property type="term" value="F:ATP-dependent protein folding chaperone"/>
    <property type="evidence" value="ECO:0007669"/>
    <property type="project" value="InterPro"/>
</dbReference>
<dbReference type="GO" id="GO:0009408">
    <property type="term" value="P:response to heat"/>
    <property type="evidence" value="ECO:0000270"/>
    <property type="project" value="TAIR"/>
</dbReference>
<dbReference type="FunFam" id="2.60.34.10:FF:000019">
    <property type="entry name" value="Heat shock 70 kDa protein 8"/>
    <property type="match status" value="1"/>
</dbReference>
<dbReference type="FunFam" id="3.30.30.30:FF:000006">
    <property type="entry name" value="Heat shock 70 kDa protein 8"/>
    <property type="match status" value="1"/>
</dbReference>
<dbReference type="Gene3D" id="3.30.30.30">
    <property type="match status" value="1"/>
</dbReference>
<dbReference type="Gene3D" id="3.30.420.40">
    <property type="match status" value="2"/>
</dbReference>
<dbReference type="Gene3D" id="3.90.640.10">
    <property type="entry name" value="Actin, Chain A, domain 4"/>
    <property type="match status" value="1"/>
</dbReference>
<dbReference type="Gene3D" id="2.60.34.10">
    <property type="entry name" value="Substrate Binding Domain Of DNAk, Chain A, domain 1"/>
    <property type="match status" value="1"/>
</dbReference>
<dbReference type="InterPro" id="IPR043129">
    <property type="entry name" value="ATPase_NBD"/>
</dbReference>
<dbReference type="InterPro" id="IPR018181">
    <property type="entry name" value="Heat_shock_70_CS"/>
</dbReference>
<dbReference type="InterPro" id="IPR029047">
    <property type="entry name" value="HSP70_peptide-bd_sf"/>
</dbReference>
<dbReference type="InterPro" id="IPR013126">
    <property type="entry name" value="Hsp_70_fam"/>
</dbReference>
<dbReference type="PANTHER" id="PTHR19375">
    <property type="entry name" value="HEAT SHOCK PROTEIN 70KDA"/>
    <property type="match status" value="1"/>
</dbReference>
<dbReference type="Pfam" id="PF00012">
    <property type="entry name" value="HSP70"/>
    <property type="match status" value="1"/>
</dbReference>
<dbReference type="PRINTS" id="PR00301">
    <property type="entry name" value="HEATSHOCK70"/>
</dbReference>
<dbReference type="SUPFAM" id="SSF53067">
    <property type="entry name" value="Actin-like ATPase domain"/>
    <property type="match status" value="2"/>
</dbReference>
<dbReference type="SUPFAM" id="SSF100920">
    <property type="entry name" value="Heat shock protein 70kD (HSP70), peptide-binding domain"/>
    <property type="match status" value="1"/>
</dbReference>
<dbReference type="PROSITE" id="PS01036">
    <property type="entry name" value="HSP70_3"/>
    <property type="match status" value="1"/>
</dbReference>
<keyword id="KW-0007">Acetylation</keyword>
<keyword id="KW-0067">ATP-binding</keyword>
<keyword id="KW-0143">Chaperone</keyword>
<keyword id="KW-0547">Nucleotide-binding</keyword>
<keyword id="KW-1185">Reference proteome</keyword>
<keyword id="KW-0346">Stress response</keyword>
<comment type="function">
    <text evidence="2">In cooperation with other chaperones, Hsp70s are key components that facilitate folding of de novo synthesized proteins, assist translocation of precursor proteins into organelles, and are responsible for degradation of damaged protein under stress conditions.</text>
</comment>
<comment type="similarity">
    <text evidence="2">Belongs to the heat shock protein 70 (TC 1.A.33) family. DnaK subfamily.</text>
</comment>
<name>HSP7H_ARATH</name>
<proteinExistence type="evidence at protein level"/>